<sequence>MSYSIGIDYGTASGRVFLINTTNGQVVSKFVKPYTHGVIESELNGLKIPHTYALQNSNDYLEIMEEGISYIVRESKIDPVNIVGIGIDFTSSTIIFTDENINPVHNLKQFKNNPHAYVKLWKHHGAYKEAEKLYQTAIENNNKWLGHYGYNVSSEWMIPKIMEVMNRAPEIMEKTAYIMEAGDWIVNKLTNKNVRSNCGLGFKAFWEEETGFHYDLFDKIDPKLSKVIQDKVSAPVVNIGEAVGKLDDKMAQKLGLSKETMVSPFIIDAHASLLGIGSEKDKEMTMVLGTSTCHLMLNEKQHQVPGISGSVKGAIIPELFAYEAGQSAVGDLFEYVAKQAPKSYVDEAANRNMTVFELMNEKIKHQMPGESGLIALDWHNGNRSVLSDSNLTGCIFGLTLQTKHEDIYRAYLEATAFGTKMIMQQYQDWHMEVEKVFACGGIPKKNAVMMDIYANVLNKKLIVMDSEYAPAIGAAILGAVSGGAHNSINDAVDAMKEPILYEINPEAEKVQRYETLFKAYKALHDIHGYKKANIMKDIQSLRVEG</sequence>
<name>ARAB_STAAB</name>
<reference key="1">
    <citation type="journal article" date="2007" name="PLoS ONE">
        <title>Molecular correlates of host specialization in Staphylococcus aureus.</title>
        <authorList>
            <person name="Herron-Olson L."/>
            <person name="Fitzgerald J.R."/>
            <person name="Musser J.M."/>
            <person name="Kapur V."/>
        </authorList>
    </citation>
    <scope>NUCLEOTIDE SEQUENCE [LARGE SCALE GENOMIC DNA]</scope>
    <source>
        <strain>bovine RF122 / ET3-1</strain>
    </source>
</reference>
<proteinExistence type="inferred from homology"/>
<evidence type="ECO:0000255" key="1">
    <source>
        <dbReference type="HAMAP-Rule" id="MF_00520"/>
    </source>
</evidence>
<feature type="chain" id="PRO_0000263407" description="Ribulokinase">
    <location>
        <begin position="1"/>
        <end position="545"/>
    </location>
</feature>
<keyword id="KW-0054">Arabinose catabolism</keyword>
<keyword id="KW-0067">ATP-binding</keyword>
<keyword id="KW-0119">Carbohydrate metabolism</keyword>
<keyword id="KW-0418">Kinase</keyword>
<keyword id="KW-0547">Nucleotide-binding</keyword>
<keyword id="KW-0808">Transferase</keyword>
<protein>
    <recommendedName>
        <fullName evidence="1">Ribulokinase</fullName>
        <ecNumber evidence="1">2.7.1.16</ecNumber>
    </recommendedName>
</protein>
<dbReference type="EC" id="2.7.1.16" evidence="1"/>
<dbReference type="EMBL" id="AJ938182">
    <property type="protein sequence ID" value="CAI80191.1"/>
    <property type="molecule type" value="Genomic_DNA"/>
</dbReference>
<dbReference type="RefSeq" id="WP_000122345.1">
    <property type="nucleotide sequence ID" value="NC_007622.1"/>
</dbReference>
<dbReference type="SMR" id="Q2YSA9"/>
<dbReference type="KEGG" id="sab:SAB0503"/>
<dbReference type="HOGENOM" id="CLU_009281_9_1_9"/>
<dbReference type="UniPathway" id="UPA00145">
    <property type="reaction ID" value="UER00566"/>
</dbReference>
<dbReference type="GO" id="GO:0005737">
    <property type="term" value="C:cytoplasm"/>
    <property type="evidence" value="ECO:0007669"/>
    <property type="project" value="TreeGrafter"/>
</dbReference>
<dbReference type="GO" id="GO:0005524">
    <property type="term" value="F:ATP binding"/>
    <property type="evidence" value="ECO:0007669"/>
    <property type="project" value="UniProtKB-KW"/>
</dbReference>
<dbReference type="GO" id="GO:0019150">
    <property type="term" value="F:D-ribulokinase activity"/>
    <property type="evidence" value="ECO:0007669"/>
    <property type="project" value="RHEA"/>
</dbReference>
<dbReference type="GO" id="GO:0008741">
    <property type="term" value="F:ribulokinase activity"/>
    <property type="evidence" value="ECO:0007669"/>
    <property type="project" value="UniProtKB-UniRule"/>
</dbReference>
<dbReference type="GO" id="GO:0019569">
    <property type="term" value="P:L-arabinose catabolic process to xylulose 5-phosphate"/>
    <property type="evidence" value="ECO:0007669"/>
    <property type="project" value="UniProtKB-UniRule"/>
</dbReference>
<dbReference type="CDD" id="cd07781">
    <property type="entry name" value="ASKHA_NBD_FGGY_L-RBK"/>
    <property type="match status" value="1"/>
</dbReference>
<dbReference type="Gene3D" id="1.20.58.2240">
    <property type="match status" value="1"/>
</dbReference>
<dbReference type="Gene3D" id="3.30.420.40">
    <property type="match status" value="1"/>
</dbReference>
<dbReference type="HAMAP" id="MF_00520">
    <property type="entry name" value="Ribulokinase"/>
    <property type="match status" value="1"/>
</dbReference>
<dbReference type="InterPro" id="IPR043129">
    <property type="entry name" value="ATPase_NBD"/>
</dbReference>
<dbReference type="InterPro" id="IPR000577">
    <property type="entry name" value="Carb_kinase_FGGY"/>
</dbReference>
<dbReference type="InterPro" id="IPR018485">
    <property type="entry name" value="FGGY_C"/>
</dbReference>
<dbReference type="InterPro" id="IPR018484">
    <property type="entry name" value="FGGY_N"/>
</dbReference>
<dbReference type="InterPro" id="IPR005929">
    <property type="entry name" value="Ribulokinase"/>
</dbReference>
<dbReference type="NCBIfam" id="NF003154">
    <property type="entry name" value="PRK04123.1"/>
    <property type="match status" value="1"/>
</dbReference>
<dbReference type="PANTHER" id="PTHR43435:SF4">
    <property type="entry name" value="FGGY CARBOHYDRATE KINASE DOMAIN-CONTAINING PROTEIN"/>
    <property type="match status" value="1"/>
</dbReference>
<dbReference type="PANTHER" id="PTHR43435">
    <property type="entry name" value="RIBULOKINASE"/>
    <property type="match status" value="1"/>
</dbReference>
<dbReference type="Pfam" id="PF02782">
    <property type="entry name" value="FGGY_C"/>
    <property type="match status" value="1"/>
</dbReference>
<dbReference type="Pfam" id="PF00370">
    <property type="entry name" value="FGGY_N"/>
    <property type="match status" value="1"/>
</dbReference>
<dbReference type="PIRSF" id="PIRSF000538">
    <property type="entry name" value="GlpK"/>
    <property type="match status" value="1"/>
</dbReference>
<dbReference type="SUPFAM" id="SSF53067">
    <property type="entry name" value="Actin-like ATPase domain"/>
    <property type="match status" value="2"/>
</dbReference>
<comment type="catalytic activity">
    <reaction evidence="1">
        <text>D-ribulose + ATP = D-ribulose 5-phosphate + ADP + H(+)</text>
        <dbReference type="Rhea" id="RHEA:17601"/>
        <dbReference type="ChEBI" id="CHEBI:15378"/>
        <dbReference type="ChEBI" id="CHEBI:17173"/>
        <dbReference type="ChEBI" id="CHEBI:30616"/>
        <dbReference type="ChEBI" id="CHEBI:58121"/>
        <dbReference type="ChEBI" id="CHEBI:456216"/>
        <dbReference type="EC" id="2.7.1.16"/>
    </reaction>
</comment>
<comment type="catalytic activity">
    <reaction evidence="1">
        <text>L-ribulose + ATP = L-ribulose 5-phosphate + ADP + H(+)</text>
        <dbReference type="Rhea" id="RHEA:22072"/>
        <dbReference type="ChEBI" id="CHEBI:15378"/>
        <dbReference type="ChEBI" id="CHEBI:16880"/>
        <dbReference type="ChEBI" id="CHEBI:30616"/>
        <dbReference type="ChEBI" id="CHEBI:58226"/>
        <dbReference type="ChEBI" id="CHEBI:456216"/>
        <dbReference type="EC" id="2.7.1.16"/>
    </reaction>
</comment>
<comment type="pathway">
    <text evidence="1">Carbohydrate degradation; L-arabinose degradation via L-ribulose; D-xylulose 5-phosphate from L-arabinose (bacterial route): step 2/3.</text>
</comment>
<comment type="similarity">
    <text evidence="1">Belongs to the ribulokinase family.</text>
</comment>
<accession>Q2YSA9</accession>
<gene>
    <name evidence="1" type="primary">araB</name>
    <name type="ordered locus">SAB0503</name>
</gene>
<organism>
    <name type="scientific">Staphylococcus aureus (strain bovine RF122 / ET3-1)</name>
    <dbReference type="NCBI Taxonomy" id="273036"/>
    <lineage>
        <taxon>Bacteria</taxon>
        <taxon>Bacillati</taxon>
        <taxon>Bacillota</taxon>
        <taxon>Bacilli</taxon>
        <taxon>Bacillales</taxon>
        <taxon>Staphylococcaceae</taxon>
        <taxon>Staphylococcus</taxon>
    </lineage>
</organism>